<protein>
    <recommendedName>
        <fullName evidence="1">Aminomethyltransferase</fullName>
        <ecNumber evidence="1">2.1.2.10</ecNumber>
    </recommendedName>
    <alternativeName>
        <fullName evidence="1">Glycine cleavage system T protein</fullName>
    </alternativeName>
</protein>
<organism>
    <name type="scientific">Shewanella baltica (strain OS155 / ATCC BAA-1091)</name>
    <dbReference type="NCBI Taxonomy" id="325240"/>
    <lineage>
        <taxon>Bacteria</taxon>
        <taxon>Pseudomonadati</taxon>
        <taxon>Pseudomonadota</taxon>
        <taxon>Gammaproteobacteria</taxon>
        <taxon>Alteromonadales</taxon>
        <taxon>Shewanellaceae</taxon>
        <taxon>Shewanella</taxon>
    </lineage>
</organism>
<proteinExistence type="inferred from homology"/>
<feature type="chain" id="PRO_1000047698" description="Aminomethyltransferase">
    <location>
        <begin position="1"/>
        <end position="364"/>
    </location>
</feature>
<sequence length="364" mass="39656">MANKTILFNKHLESNAKMVDFHGWDMPLNYGSQIEEHNAVRQDAGMFDVSHMTVVDVIGNDACAFLRKLLANDVAKLKVPGKALYGGMLDENAGVIDDLITYYLTDTNYRVVVNSATREKDLAWIAKQSQGFDVTVTERPELAMIAVQGPNAKAKAAAVLSAEQNAAIEGMKPFFGKQAGSLFIATTGYTGEAGYEIIVPENEAEAMWQALLDQGVKPCGLGARDTLRLEAGMNLYGLDMDETINPLAANMGWTIAWEPSDRDFIGRKALETLRDAGTDKLVGLVMEEKGVLRHDMPVFFTDSAGVEHQGVITSGTFSPTLGYSIAMARVPNSIGDTAEVEMRKKRVAVRVVAPNFVRNGKQAF</sequence>
<evidence type="ECO:0000255" key="1">
    <source>
        <dbReference type="HAMAP-Rule" id="MF_00259"/>
    </source>
</evidence>
<dbReference type="EC" id="2.1.2.10" evidence="1"/>
<dbReference type="EMBL" id="CP000563">
    <property type="protein sequence ID" value="ABN60146.1"/>
    <property type="molecule type" value="Genomic_DNA"/>
</dbReference>
<dbReference type="RefSeq" id="WP_011845765.1">
    <property type="nucleotide sequence ID" value="NC_009052.1"/>
</dbReference>
<dbReference type="SMR" id="A3D083"/>
<dbReference type="STRING" id="325240.Sbal_0617"/>
<dbReference type="KEGG" id="sbl:Sbal_0617"/>
<dbReference type="HOGENOM" id="CLU_007884_10_2_6"/>
<dbReference type="OrthoDB" id="9774591at2"/>
<dbReference type="Proteomes" id="UP000001557">
    <property type="component" value="Chromosome"/>
</dbReference>
<dbReference type="GO" id="GO:0005829">
    <property type="term" value="C:cytosol"/>
    <property type="evidence" value="ECO:0007669"/>
    <property type="project" value="TreeGrafter"/>
</dbReference>
<dbReference type="GO" id="GO:0005960">
    <property type="term" value="C:glycine cleavage complex"/>
    <property type="evidence" value="ECO:0007669"/>
    <property type="project" value="InterPro"/>
</dbReference>
<dbReference type="GO" id="GO:0004047">
    <property type="term" value="F:aminomethyltransferase activity"/>
    <property type="evidence" value="ECO:0007669"/>
    <property type="project" value="UniProtKB-UniRule"/>
</dbReference>
<dbReference type="GO" id="GO:0008483">
    <property type="term" value="F:transaminase activity"/>
    <property type="evidence" value="ECO:0007669"/>
    <property type="project" value="UniProtKB-KW"/>
</dbReference>
<dbReference type="GO" id="GO:0019464">
    <property type="term" value="P:glycine decarboxylation via glycine cleavage system"/>
    <property type="evidence" value="ECO:0007669"/>
    <property type="project" value="UniProtKB-UniRule"/>
</dbReference>
<dbReference type="FunFam" id="2.40.30.110:FF:000001">
    <property type="entry name" value="Aminomethyltransferase"/>
    <property type="match status" value="1"/>
</dbReference>
<dbReference type="FunFam" id="3.30.70.1400:FF:000001">
    <property type="entry name" value="Aminomethyltransferase"/>
    <property type="match status" value="1"/>
</dbReference>
<dbReference type="FunFam" id="4.10.1250.10:FF:000001">
    <property type="entry name" value="Aminomethyltransferase"/>
    <property type="match status" value="1"/>
</dbReference>
<dbReference type="Gene3D" id="2.40.30.110">
    <property type="entry name" value="Aminomethyltransferase beta-barrel domains"/>
    <property type="match status" value="1"/>
</dbReference>
<dbReference type="Gene3D" id="3.30.70.1400">
    <property type="entry name" value="Aminomethyltransferase beta-barrel domains"/>
    <property type="match status" value="1"/>
</dbReference>
<dbReference type="Gene3D" id="4.10.1250.10">
    <property type="entry name" value="Aminomethyltransferase fragment"/>
    <property type="match status" value="1"/>
</dbReference>
<dbReference type="Gene3D" id="3.30.1360.120">
    <property type="entry name" value="Probable tRNA modification gtpase trme, domain 1"/>
    <property type="match status" value="1"/>
</dbReference>
<dbReference type="HAMAP" id="MF_00259">
    <property type="entry name" value="GcvT"/>
    <property type="match status" value="1"/>
</dbReference>
<dbReference type="InterPro" id="IPR006223">
    <property type="entry name" value="GCS_T"/>
</dbReference>
<dbReference type="InterPro" id="IPR022903">
    <property type="entry name" value="GCS_T_bac"/>
</dbReference>
<dbReference type="InterPro" id="IPR013977">
    <property type="entry name" value="GCST_C"/>
</dbReference>
<dbReference type="InterPro" id="IPR006222">
    <property type="entry name" value="GCV_T_N"/>
</dbReference>
<dbReference type="InterPro" id="IPR028896">
    <property type="entry name" value="GcvT/YgfZ/DmdA"/>
</dbReference>
<dbReference type="InterPro" id="IPR029043">
    <property type="entry name" value="GcvT/YgfZ_C"/>
</dbReference>
<dbReference type="InterPro" id="IPR027266">
    <property type="entry name" value="TrmE/GcvT_dom1"/>
</dbReference>
<dbReference type="NCBIfam" id="TIGR00528">
    <property type="entry name" value="gcvT"/>
    <property type="match status" value="1"/>
</dbReference>
<dbReference type="NCBIfam" id="NF001567">
    <property type="entry name" value="PRK00389.1"/>
    <property type="match status" value="1"/>
</dbReference>
<dbReference type="PANTHER" id="PTHR43757">
    <property type="entry name" value="AMINOMETHYLTRANSFERASE"/>
    <property type="match status" value="1"/>
</dbReference>
<dbReference type="PANTHER" id="PTHR43757:SF2">
    <property type="entry name" value="AMINOMETHYLTRANSFERASE, MITOCHONDRIAL"/>
    <property type="match status" value="1"/>
</dbReference>
<dbReference type="Pfam" id="PF01571">
    <property type="entry name" value="GCV_T"/>
    <property type="match status" value="1"/>
</dbReference>
<dbReference type="Pfam" id="PF08669">
    <property type="entry name" value="GCV_T_C"/>
    <property type="match status" value="1"/>
</dbReference>
<dbReference type="PIRSF" id="PIRSF006487">
    <property type="entry name" value="GcvT"/>
    <property type="match status" value="1"/>
</dbReference>
<dbReference type="SUPFAM" id="SSF101790">
    <property type="entry name" value="Aminomethyltransferase beta-barrel domain"/>
    <property type="match status" value="1"/>
</dbReference>
<dbReference type="SUPFAM" id="SSF103025">
    <property type="entry name" value="Folate-binding domain"/>
    <property type="match status" value="1"/>
</dbReference>
<reference key="1">
    <citation type="submission" date="2007-02" db="EMBL/GenBank/DDBJ databases">
        <title>Complete sequence of chromosome of Shewanella baltica OS155.</title>
        <authorList>
            <consortium name="US DOE Joint Genome Institute"/>
            <person name="Copeland A."/>
            <person name="Lucas S."/>
            <person name="Lapidus A."/>
            <person name="Barry K."/>
            <person name="Detter J.C."/>
            <person name="Glavina del Rio T."/>
            <person name="Hammon N."/>
            <person name="Israni S."/>
            <person name="Dalin E."/>
            <person name="Tice H."/>
            <person name="Pitluck S."/>
            <person name="Sims D.R."/>
            <person name="Brettin T."/>
            <person name="Bruce D."/>
            <person name="Han C."/>
            <person name="Tapia R."/>
            <person name="Brainard J."/>
            <person name="Schmutz J."/>
            <person name="Larimer F."/>
            <person name="Land M."/>
            <person name="Hauser L."/>
            <person name="Kyrpides N."/>
            <person name="Mikhailova N."/>
            <person name="Brettar I."/>
            <person name="Klappenbach J."/>
            <person name="Konstantinidis K."/>
            <person name="Rodrigues J."/>
            <person name="Tiedje J."/>
            <person name="Richardson P."/>
        </authorList>
    </citation>
    <scope>NUCLEOTIDE SEQUENCE [LARGE SCALE GENOMIC DNA]</scope>
    <source>
        <strain>OS155 / ATCC BAA-1091</strain>
    </source>
</reference>
<accession>A3D083</accession>
<name>GCST_SHEB5</name>
<keyword id="KW-0032">Aminotransferase</keyword>
<keyword id="KW-1185">Reference proteome</keyword>
<keyword id="KW-0808">Transferase</keyword>
<comment type="function">
    <text evidence="1">The glycine cleavage system catalyzes the degradation of glycine.</text>
</comment>
<comment type="catalytic activity">
    <reaction evidence="1">
        <text>N(6)-[(R)-S(8)-aminomethyldihydrolipoyl]-L-lysyl-[protein] + (6S)-5,6,7,8-tetrahydrofolate = N(6)-[(R)-dihydrolipoyl]-L-lysyl-[protein] + (6R)-5,10-methylene-5,6,7,8-tetrahydrofolate + NH4(+)</text>
        <dbReference type="Rhea" id="RHEA:16945"/>
        <dbReference type="Rhea" id="RHEA-COMP:10475"/>
        <dbReference type="Rhea" id="RHEA-COMP:10492"/>
        <dbReference type="ChEBI" id="CHEBI:15636"/>
        <dbReference type="ChEBI" id="CHEBI:28938"/>
        <dbReference type="ChEBI" id="CHEBI:57453"/>
        <dbReference type="ChEBI" id="CHEBI:83100"/>
        <dbReference type="ChEBI" id="CHEBI:83143"/>
        <dbReference type="EC" id="2.1.2.10"/>
    </reaction>
</comment>
<comment type="subunit">
    <text evidence="1">The glycine cleavage system is composed of four proteins: P, T, L and H.</text>
</comment>
<comment type="similarity">
    <text evidence="1">Belongs to the GcvT family.</text>
</comment>
<gene>
    <name evidence="1" type="primary">gcvT</name>
    <name type="ordered locus">Sbal_0617</name>
</gene>